<protein>
    <recommendedName>
        <fullName evidence="1">5-methyltetrahydropteroyltriglutamate--homocysteine methyltransferase</fullName>
        <ecNumber evidence="1">2.1.1.14</ecNumber>
    </recommendedName>
    <alternativeName>
        <fullName evidence="1">Cobalamin-independent methionine synthase</fullName>
    </alternativeName>
    <alternativeName>
        <fullName evidence="1">Methionine synthase, vitamin-B12 independent isozyme</fullName>
    </alternativeName>
</protein>
<reference key="1">
    <citation type="journal article" date="2005" name="Nucleic Acids Res.">
        <title>The genome sequence of Salmonella enterica serovar Choleraesuis, a highly invasive and resistant zoonotic pathogen.</title>
        <authorList>
            <person name="Chiu C.-H."/>
            <person name="Tang P."/>
            <person name="Chu C."/>
            <person name="Hu S."/>
            <person name="Bao Q."/>
            <person name="Yu J."/>
            <person name="Chou Y.-Y."/>
            <person name="Wang H.-S."/>
            <person name="Lee Y.-S."/>
        </authorList>
    </citation>
    <scope>NUCLEOTIDE SEQUENCE [LARGE SCALE GENOMIC DNA]</scope>
    <source>
        <strain>SC-B67</strain>
    </source>
</reference>
<feature type="chain" id="PRO_1000017270" description="5-methyltetrahydropteroyltriglutamate--homocysteine methyltransferase">
    <location>
        <begin position="1"/>
        <end position="754"/>
    </location>
</feature>
<feature type="active site" description="Proton donor" evidence="1">
    <location>
        <position position="694"/>
    </location>
</feature>
<feature type="binding site" evidence="1">
    <location>
        <begin position="17"/>
        <end position="20"/>
    </location>
    <ligand>
        <name>5-methyltetrahydropteroyltri-L-glutamate</name>
        <dbReference type="ChEBI" id="CHEBI:58207"/>
    </ligand>
</feature>
<feature type="binding site" evidence="1">
    <location>
        <position position="117"/>
    </location>
    <ligand>
        <name>5-methyltetrahydropteroyltri-L-glutamate</name>
        <dbReference type="ChEBI" id="CHEBI:58207"/>
    </ligand>
</feature>
<feature type="binding site" evidence="1">
    <location>
        <begin position="431"/>
        <end position="433"/>
    </location>
    <ligand>
        <name>L-homocysteine</name>
        <dbReference type="ChEBI" id="CHEBI:58199"/>
    </ligand>
</feature>
<feature type="binding site" evidence="1">
    <location>
        <begin position="431"/>
        <end position="433"/>
    </location>
    <ligand>
        <name>L-methionine</name>
        <dbReference type="ChEBI" id="CHEBI:57844"/>
    </ligand>
</feature>
<feature type="binding site" evidence="1">
    <location>
        <position position="484"/>
    </location>
    <ligand>
        <name>L-homocysteine</name>
        <dbReference type="ChEBI" id="CHEBI:58199"/>
    </ligand>
</feature>
<feature type="binding site" evidence="1">
    <location>
        <position position="484"/>
    </location>
    <ligand>
        <name>L-methionine</name>
        <dbReference type="ChEBI" id="CHEBI:57844"/>
    </ligand>
</feature>
<feature type="binding site" evidence="1">
    <location>
        <begin position="515"/>
        <end position="516"/>
    </location>
    <ligand>
        <name>5-methyltetrahydropteroyltri-L-glutamate</name>
        <dbReference type="ChEBI" id="CHEBI:58207"/>
    </ligand>
</feature>
<feature type="binding site" evidence="1">
    <location>
        <position position="561"/>
    </location>
    <ligand>
        <name>5-methyltetrahydropteroyltri-L-glutamate</name>
        <dbReference type="ChEBI" id="CHEBI:58207"/>
    </ligand>
</feature>
<feature type="binding site" evidence="1">
    <location>
        <position position="599"/>
    </location>
    <ligand>
        <name>L-homocysteine</name>
        <dbReference type="ChEBI" id="CHEBI:58199"/>
    </ligand>
</feature>
<feature type="binding site" evidence="1">
    <location>
        <position position="599"/>
    </location>
    <ligand>
        <name>L-methionine</name>
        <dbReference type="ChEBI" id="CHEBI:57844"/>
    </ligand>
</feature>
<feature type="binding site" evidence="1">
    <location>
        <position position="605"/>
    </location>
    <ligand>
        <name>5-methyltetrahydropteroyltri-L-glutamate</name>
        <dbReference type="ChEBI" id="CHEBI:58207"/>
    </ligand>
</feature>
<feature type="binding site" evidence="1">
    <location>
        <position position="641"/>
    </location>
    <ligand>
        <name>Zn(2+)</name>
        <dbReference type="ChEBI" id="CHEBI:29105"/>
        <note>catalytic</note>
    </ligand>
</feature>
<feature type="binding site" evidence="1">
    <location>
        <position position="643"/>
    </location>
    <ligand>
        <name>Zn(2+)</name>
        <dbReference type="ChEBI" id="CHEBI:29105"/>
        <note>catalytic</note>
    </ligand>
</feature>
<feature type="binding site" evidence="1">
    <location>
        <position position="665"/>
    </location>
    <ligand>
        <name>Zn(2+)</name>
        <dbReference type="ChEBI" id="CHEBI:29105"/>
        <note>catalytic</note>
    </ligand>
</feature>
<feature type="binding site" evidence="1">
    <location>
        <position position="726"/>
    </location>
    <ligand>
        <name>Zn(2+)</name>
        <dbReference type="ChEBI" id="CHEBI:29105"/>
        <note>catalytic</note>
    </ligand>
</feature>
<keyword id="KW-0028">Amino-acid biosynthesis</keyword>
<keyword id="KW-0479">Metal-binding</keyword>
<keyword id="KW-0486">Methionine biosynthesis</keyword>
<keyword id="KW-0489">Methyltransferase</keyword>
<keyword id="KW-0677">Repeat</keyword>
<keyword id="KW-0808">Transferase</keyword>
<keyword id="KW-0862">Zinc</keyword>
<comment type="function">
    <text evidence="1">Catalyzes the transfer of a methyl group from 5-methyltetrahydrofolate to homocysteine resulting in methionine formation.</text>
</comment>
<comment type="catalytic activity">
    <reaction evidence="1">
        <text>5-methyltetrahydropteroyltri-L-glutamate + L-homocysteine = tetrahydropteroyltri-L-glutamate + L-methionine</text>
        <dbReference type="Rhea" id="RHEA:21196"/>
        <dbReference type="ChEBI" id="CHEBI:57844"/>
        <dbReference type="ChEBI" id="CHEBI:58140"/>
        <dbReference type="ChEBI" id="CHEBI:58199"/>
        <dbReference type="ChEBI" id="CHEBI:58207"/>
        <dbReference type="EC" id="2.1.1.14"/>
    </reaction>
</comment>
<comment type="cofactor">
    <cofactor evidence="1">
        <name>Zn(2+)</name>
        <dbReference type="ChEBI" id="CHEBI:29105"/>
    </cofactor>
    <text evidence="1">Binds 1 zinc ion per subunit.</text>
</comment>
<comment type="pathway">
    <text evidence="1">Amino-acid biosynthesis; L-methionine biosynthesis via de novo pathway; L-methionine from L-homocysteine (MetE route): step 1/1.</text>
</comment>
<comment type="similarity">
    <text evidence="1">Belongs to the vitamin-B12 independent methionine synthase family.</text>
</comment>
<dbReference type="EC" id="2.1.1.14" evidence="1"/>
<dbReference type="EMBL" id="AE017220">
    <property type="protein sequence ID" value="AAX67770.1"/>
    <property type="molecule type" value="Genomic_DNA"/>
</dbReference>
<dbReference type="RefSeq" id="WP_001541200.1">
    <property type="nucleotide sequence ID" value="NC_006905.1"/>
</dbReference>
<dbReference type="SMR" id="Q57HP2"/>
<dbReference type="KEGG" id="sec:SCH_3864"/>
<dbReference type="HOGENOM" id="CLU_013175_0_0_6"/>
<dbReference type="UniPathway" id="UPA00051">
    <property type="reaction ID" value="UER00082"/>
</dbReference>
<dbReference type="Proteomes" id="UP000000538">
    <property type="component" value="Chromosome"/>
</dbReference>
<dbReference type="GO" id="GO:0003871">
    <property type="term" value="F:5-methyltetrahydropteroyltriglutamate-homocysteine S-methyltransferase activity"/>
    <property type="evidence" value="ECO:0007669"/>
    <property type="project" value="UniProtKB-UniRule"/>
</dbReference>
<dbReference type="GO" id="GO:0008270">
    <property type="term" value="F:zinc ion binding"/>
    <property type="evidence" value="ECO:0007669"/>
    <property type="project" value="InterPro"/>
</dbReference>
<dbReference type="GO" id="GO:0009086">
    <property type="term" value="P:methionine biosynthetic process"/>
    <property type="evidence" value="ECO:0007669"/>
    <property type="project" value="UniProtKB-UniRule"/>
</dbReference>
<dbReference type="GO" id="GO:0032259">
    <property type="term" value="P:methylation"/>
    <property type="evidence" value="ECO:0007669"/>
    <property type="project" value="UniProtKB-KW"/>
</dbReference>
<dbReference type="CDD" id="cd03311">
    <property type="entry name" value="CIMS_C_terminal_like"/>
    <property type="match status" value="1"/>
</dbReference>
<dbReference type="CDD" id="cd03312">
    <property type="entry name" value="CIMS_N_terminal_like"/>
    <property type="match status" value="1"/>
</dbReference>
<dbReference type="FunFam" id="3.20.20.210:FF:000002">
    <property type="entry name" value="5-methyltetrahydropteroyltriglutamate--homocysteine methyltransferase"/>
    <property type="match status" value="1"/>
</dbReference>
<dbReference type="FunFam" id="3.20.20.210:FF:000003">
    <property type="entry name" value="5-methyltetrahydropteroyltriglutamate--homocysteine methyltransferase"/>
    <property type="match status" value="1"/>
</dbReference>
<dbReference type="Gene3D" id="3.20.20.210">
    <property type="match status" value="2"/>
</dbReference>
<dbReference type="HAMAP" id="MF_00172">
    <property type="entry name" value="Meth_synth"/>
    <property type="match status" value="1"/>
</dbReference>
<dbReference type="InterPro" id="IPR013215">
    <property type="entry name" value="Cbl-indep_Met_Synth_N"/>
</dbReference>
<dbReference type="InterPro" id="IPR006276">
    <property type="entry name" value="Cobalamin-indep_Met_synthase"/>
</dbReference>
<dbReference type="InterPro" id="IPR002629">
    <property type="entry name" value="Met_Synth_C/arc"/>
</dbReference>
<dbReference type="InterPro" id="IPR038071">
    <property type="entry name" value="UROD/MetE-like_sf"/>
</dbReference>
<dbReference type="NCBIfam" id="TIGR01371">
    <property type="entry name" value="met_syn_B12ind"/>
    <property type="match status" value="1"/>
</dbReference>
<dbReference type="NCBIfam" id="NF003556">
    <property type="entry name" value="PRK05222.1"/>
    <property type="match status" value="1"/>
</dbReference>
<dbReference type="PANTHER" id="PTHR30519">
    <property type="entry name" value="5-METHYLTETRAHYDROPTEROYLTRIGLUTAMATE--HOMOCYSTEINE METHYLTRANSFERASE"/>
    <property type="match status" value="1"/>
</dbReference>
<dbReference type="Pfam" id="PF08267">
    <property type="entry name" value="Meth_synt_1"/>
    <property type="match status" value="1"/>
</dbReference>
<dbReference type="Pfam" id="PF01717">
    <property type="entry name" value="Meth_synt_2"/>
    <property type="match status" value="1"/>
</dbReference>
<dbReference type="PIRSF" id="PIRSF000382">
    <property type="entry name" value="MeTrfase_B12_ind"/>
    <property type="match status" value="1"/>
</dbReference>
<dbReference type="SUPFAM" id="SSF51726">
    <property type="entry name" value="UROD/MetE-like"/>
    <property type="match status" value="2"/>
</dbReference>
<proteinExistence type="inferred from homology"/>
<evidence type="ECO:0000255" key="1">
    <source>
        <dbReference type="HAMAP-Rule" id="MF_00172"/>
    </source>
</evidence>
<name>METE_SALCH</name>
<accession>Q57HP2</accession>
<organism>
    <name type="scientific">Salmonella choleraesuis (strain SC-B67)</name>
    <dbReference type="NCBI Taxonomy" id="321314"/>
    <lineage>
        <taxon>Bacteria</taxon>
        <taxon>Pseudomonadati</taxon>
        <taxon>Pseudomonadota</taxon>
        <taxon>Gammaproteobacteria</taxon>
        <taxon>Enterobacterales</taxon>
        <taxon>Enterobacteriaceae</taxon>
        <taxon>Salmonella</taxon>
    </lineage>
</organism>
<gene>
    <name evidence="1" type="primary">metE</name>
    <name type="ordered locus">SCH_3864</name>
</gene>
<sequence>MTILTHTLGFPRVGLRRELKKAQESYWAGNSTREALLAVGRELRARHWEQQKQAGIDLLPVGDFAWYDHVLTTSLLLGNVPARHQNNDGSMDIDTLFRIGRGRAPTGEPAAAAEMTKWFNTNYHYIVPEFSKGQQFRLTWTQLLEEVDEALALGHKIKPVLLGPVTYLWLGKVKGEPFDRLTLLKDILPVYQHVLAELAKRGIEWVQIDEPALVLELPQAWLDAFKPAYDALAGQVKLLLTTYFEGVTPNLDTIIALPVQGLHVDLIHGKDDVAELHQRLPVDWLLSAGLINGRNVWRADLTEKYAQINALVGKRALWVASSCSLLHSPIDLSVETRLDTEVKSWFAFALQKCGELALLRDALNSGETAALEEWSAPIQARRHSRRVHNAAVEKRLAAITAQDSQRENPYEVRAEAQRARFKLPAWPTTTIGSFPQTTEIRGLRLDFKKGNLDANNYRTGIAEHIKQAIIEQERLGLDVLVHGEAERNDMVEYFGEHLDGFVFTQNGWVQSYGSRCVKPPVVIGDISRPAPITVEWAKYAQSLTDKPVKGMLTGPVTILCWSFPREDVTRETIAKQIALALRDEVADLEAAGIGIIQIDEPALREGLPLRRSDWDAYLEWGVEAFRINAAVAKDETQIHTHMCYCEFNDIMDSIAALDADVITIETSRSDMELLESFEAFDYPNEIGPGVYDIHSPNVPSVEWIEALLKKAAQRIPAQRLWVNPDCGLKTRGWPETRAALANMVKAAHNLRQAK</sequence>